<name>ENOB_DICDI</name>
<feature type="chain" id="PRO_0000330351" description="Enolase B">
    <location>
        <begin position="1"/>
        <end position="443"/>
    </location>
</feature>
<feature type="active site" description="Proton donor" evidence="1">
    <location>
        <position position="208"/>
    </location>
</feature>
<feature type="active site" description="Proton acceptor" evidence="1">
    <location>
        <position position="348"/>
    </location>
</feature>
<feature type="binding site" evidence="1">
    <location>
        <position position="156"/>
    </location>
    <ligand>
        <name>substrate</name>
    </ligand>
</feature>
<feature type="binding site" evidence="1">
    <location>
        <position position="165"/>
    </location>
    <ligand>
        <name>substrate</name>
    </ligand>
</feature>
<feature type="binding site" evidence="1">
    <location>
        <position position="243"/>
    </location>
    <ligand>
        <name>Mg(2+)</name>
        <dbReference type="ChEBI" id="CHEBI:18420"/>
    </ligand>
</feature>
<feature type="binding site" evidence="1">
    <location>
        <position position="296"/>
    </location>
    <ligand>
        <name>Mg(2+)</name>
        <dbReference type="ChEBI" id="CHEBI:18420"/>
    </ligand>
</feature>
<feature type="binding site" evidence="1">
    <location>
        <position position="296"/>
    </location>
    <ligand>
        <name>substrate</name>
    </ligand>
</feature>
<feature type="binding site" evidence="1">
    <location>
        <position position="323"/>
    </location>
    <ligand>
        <name>Mg(2+)</name>
        <dbReference type="ChEBI" id="CHEBI:18420"/>
    </ligand>
</feature>
<feature type="binding site" evidence="1">
    <location>
        <position position="323"/>
    </location>
    <ligand>
        <name>substrate</name>
    </ligand>
</feature>
<feature type="binding site" evidence="1">
    <location>
        <begin position="375"/>
        <end position="378"/>
    </location>
    <ligand>
        <name>substrate</name>
    </ligand>
</feature>
<feature type="binding site" evidence="1">
    <location>
        <position position="399"/>
    </location>
    <ligand>
        <name>substrate</name>
    </ligand>
</feature>
<evidence type="ECO:0000250" key="1"/>
<evidence type="ECO:0000305" key="2"/>
<gene>
    <name type="primary">enoB</name>
    <name type="ORF">DDB_G0268214</name>
</gene>
<accession>Q55F83</accession>
<proteinExistence type="inferred from homology"/>
<comment type="catalytic activity">
    <reaction>
        <text>(2R)-2-phosphoglycerate = phosphoenolpyruvate + H2O</text>
        <dbReference type="Rhea" id="RHEA:10164"/>
        <dbReference type="ChEBI" id="CHEBI:15377"/>
        <dbReference type="ChEBI" id="CHEBI:58289"/>
        <dbReference type="ChEBI" id="CHEBI:58702"/>
        <dbReference type="EC" id="4.2.1.11"/>
    </reaction>
</comment>
<comment type="cofactor">
    <cofactor evidence="1">
        <name>Mg(2+)</name>
        <dbReference type="ChEBI" id="CHEBI:18420"/>
    </cofactor>
    <text evidence="1">Mg(2+) is required for catalysis and for stabilizing the dimer.</text>
</comment>
<comment type="pathway">
    <text>Carbohydrate degradation; glycolysis; pyruvate from D-glyceraldehyde 3-phosphate: step 4/5.</text>
</comment>
<comment type="subunit">
    <text evidence="1">Homodimer.</text>
</comment>
<comment type="subcellular location">
    <subcellularLocation>
        <location evidence="1">Cytoplasm</location>
    </subcellularLocation>
</comment>
<comment type="similarity">
    <text evidence="2">Belongs to the enolase family.</text>
</comment>
<dbReference type="EC" id="4.2.1.11"/>
<dbReference type="EMBL" id="AAFI02000003">
    <property type="protein sequence ID" value="EAL73560.1"/>
    <property type="molecule type" value="Genomic_DNA"/>
</dbReference>
<dbReference type="RefSeq" id="XP_647650.1">
    <property type="nucleotide sequence ID" value="XM_642558.1"/>
</dbReference>
<dbReference type="SMR" id="Q55F83"/>
<dbReference type="FunCoup" id="Q55F83">
    <property type="interactions" value="137"/>
</dbReference>
<dbReference type="STRING" id="44689.Q55F83"/>
<dbReference type="PaxDb" id="44689-DDB0231356"/>
<dbReference type="EnsemblProtists" id="EAL73560">
    <property type="protein sequence ID" value="EAL73560"/>
    <property type="gene ID" value="DDB_G0268214"/>
</dbReference>
<dbReference type="GeneID" id="8616467"/>
<dbReference type="KEGG" id="ddi:DDB_G0268214"/>
<dbReference type="dictyBase" id="DDB_G0268214">
    <property type="gene designation" value="enoB"/>
</dbReference>
<dbReference type="VEuPathDB" id="AmoebaDB:DDB_G0268214"/>
<dbReference type="eggNOG" id="KOG2670">
    <property type="taxonomic scope" value="Eukaryota"/>
</dbReference>
<dbReference type="HOGENOM" id="CLU_031223_0_0_1"/>
<dbReference type="InParanoid" id="Q55F83"/>
<dbReference type="OMA" id="WGCLVSH"/>
<dbReference type="PhylomeDB" id="Q55F83"/>
<dbReference type="Reactome" id="R-DDI-70171">
    <property type="pathway name" value="Glycolysis"/>
</dbReference>
<dbReference type="Reactome" id="R-DDI-70263">
    <property type="pathway name" value="Gluconeogenesis"/>
</dbReference>
<dbReference type="UniPathway" id="UPA00109">
    <property type="reaction ID" value="UER00187"/>
</dbReference>
<dbReference type="PRO" id="PR:Q55F83"/>
<dbReference type="Proteomes" id="UP000002195">
    <property type="component" value="Chromosome 1"/>
</dbReference>
<dbReference type="GO" id="GO:0000015">
    <property type="term" value="C:phosphopyruvate hydratase complex"/>
    <property type="evidence" value="ECO:0000318"/>
    <property type="project" value="GO_Central"/>
</dbReference>
<dbReference type="GO" id="GO:0000287">
    <property type="term" value="F:magnesium ion binding"/>
    <property type="evidence" value="ECO:0007669"/>
    <property type="project" value="InterPro"/>
</dbReference>
<dbReference type="GO" id="GO:0004634">
    <property type="term" value="F:phosphopyruvate hydratase activity"/>
    <property type="evidence" value="ECO:0000318"/>
    <property type="project" value="GO_Central"/>
</dbReference>
<dbReference type="GO" id="GO:0006096">
    <property type="term" value="P:glycolytic process"/>
    <property type="evidence" value="ECO:0000318"/>
    <property type="project" value="GO_Central"/>
</dbReference>
<dbReference type="CDD" id="cd03313">
    <property type="entry name" value="enolase"/>
    <property type="match status" value="1"/>
</dbReference>
<dbReference type="FunFam" id="3.30.390.10:FF:000001">
    <property type="entry name" value="Enolase"/>
    <property type="match status" value="1"/>
</dbReference>
<dbReference type="FunFam" id="3.20.20.120:FF:000002">
    <property type="entry name" value="Enolase 1"/>
    <property type="match status" value="1"/>
</dbReference>
<dbReference type="Gene3D" id="3.20.20.120">
    <property type="entry name" value="Enolase-like C-terminal domain"/>
    <property type="match status" value="1"/>
</dbReference>
<dbReference type="Gene3D" id="3.30.390.10">
    <property type="entry name" value="Enolase-like, N-terminal domain"/>
    <property type="match status" value="1"/>
</dbReference>
<dbReference type="HAMAP" id="MF_00318">
    <property type="entry name" value="Enolase"/>
    <property type="match status" value="1"/>
</dbReference>
<dbReference type="InterPro" id="IPR000941">
    <property type="entry name" value="Enolase"/>
</dbReference>
<dbReference type="InterPro" id="IPR036849">
    <property type="entry name" value="Enolase-like_C_sf"/>
</dbReference>
<dbReference type="InterPro" id="IPR029017">
    <property type="entry name" value="Enolase-like_N"/>
</dbReference>
<dbReference type="InterPro" id="IPR020810">
    <property type="entry name" value="Enolase_C"/>
</dbReference>
<dbReference type="InterPro" id="IPR020809">
    <property type="entry name" value="Enolase_CS"/>
</dbReference>
<dbReference type="InterPro" id="IPR020811">
    <property type="entry name" value="Enolase_N"/>
</dbReference>
<dbReference type="NCBIfam" id="TIGR01060">
    <property type="entry name" value="eno"/>
    <property type="match status" value="1"/>
</dbReference>
<dbReference type="PANTHER" id="PTHR11902">
    <property type="entry name" value="ENOLASE"/>
    <property type="match status" value="1"/>
</dbReference>
<dbReference type="PANTHER" id="PTHR11902:SF1">
    <property type="entry name" value="ENOLASE"/>
    <property type="match status" value="1"/>
</dbReference>
<dbReference type="Pfam" id="PF00113">
    <property type="entry name" value="Enolase_C"/>
    <property type="match status" value="1"/>
</dbReference>
<dbReference type="Pfam" id="PF03952">
    <property type="entry name" value="Enolase_N"/>
    <property type="match status" value="1"/>
</dbReference>
<dbReference type="PIRSF" id="PIRSF001400">
    <property type="entry name" value="Enolase"/>
    <property type="match status" value="1"/>
</dbReference>
<dbReference type="PRINTS" id="PR00148">
    <property type="entry name" value="ENOLASE"/>
</dbReference>
<dbReference type="SFLD" id="SFLDF00002">
    <property type="entry name" value="enolase"/>
    <property type="match status" value="1"/>
</dbReference>
<dbReference type="SFLD" id="SFLDG00178">
    <property type="entry name" value="enolase"/>
    <property type="match status" value="1"/>
</dbReference>
<dbReference type="SMART" id="SM01192">
    <property type="entry name" value="Enolase_C"/>
    <property type="match status" value="1"/>
</dbReference>
<dbReference type="SMART" id="SM01193">
    <property type="entry name" value="Enolase_N"/>
    <property type="match status" value="1"/>
</dbReference>
<dbReference type="SUPFAM" id="SSF51604">
    <property type="entry name" value="Enolase C-terminal domain-like"/>
    <property type="match status" value="1"/>
</dbReference>
<dbReference type="SUPFAM" id="SSF54826">
    <property type="entry name" value="Enolase N-terminal domain-like"/>
    <property type="match status" value="1"/>
</dbReference>
<dbReference type="PROSITE" id="PS00164">
    <property type="entry name" value="ENOLASE"/>
    <property type="match status" value="1"/>
</dbReference>
<organism>
    <name type="scientific">Dictyostelium discoideum</name>
    <name type="common">Social amoeba</name>
    <dbReference type="NCBI Taxonomy" id="44689"/>
    <lineage>
        <taxon>Eukaryota</taxon>
        <taxon>Amoebozoa</taxon>
        <taxon>Evosea</taxon>
        <taxon>Eumycetozoa</taxon>
        <taxon>Dictyostelia</taxon>
        <taxon>Dictyosteliales</taxon>
        <taxon>Dictyosteliaceae</taxon>
        <taxon>Dictyostelium</taxon>
    </lineage>
</organism>
<sequence length="443" mass="48820">MSIESIKAREILDSRGNPTLEVEVWTSEGMFSAKVPSGASTGIHEAFELRDGDKSRYFGYGVLNAIVNVNNLISPTLKGMRVDNQKAIDDKMIELDGTKNKSKLGSNAIVGVSMAVARAAASIKGVPLYRYISQLAGNSNIRLPVPCFNVINGGKHAGNRLPFQEFMLVPIGAPKFKEALRYGSEVYHSLKEIIKERYGLDATNVGDEGGFAPNLTSPEEALTLLVDAINHSGYQDVIKIGIDSAASEFWNPKTSKYDMDFKNIGSSHLKSSLNSGEQLMSRYLEILKKYPIAFFEDPFGEDDWENHGKITAAIGNKIQIIGDDLLCTNPERIKKAISEKTVNSLLLKINQIGTLTETIEAAKLAKEAGWGCLVSHRSGETDDHFIADLVVGLGTGEIKSGAPCRFERLSKYNRLMKIEEELEKLHRSNGNSFEYAGEEFYHF</sequence>
<keyword id="KW-0963">Cytoplasm</keyword>
<keyword id="KW-0324">Glycolysis</keyword>
<keyword id="KW-0456">Lyase</keyword>
<keyword id="KW-0460">Magnesium</keyword>
<keyword id="KW-0479">Metal-binding</keyword>
<keyword id="KW-1185">Reference proteome</keyword>
<reference key="1">
    <citation type="journal article" date="2005" name="Nature">
        <title>The genome of the social amoeba Dictyostelium discoideum.</title>
        <authorList>
            <person name="Eichinger L."/>
            <person name="Pachebat J.A."/>
            <person name="Gloeckner G."/>
            <person name="Rajandream M.A."/>
            <person name="Sucgang R."/>
            <person name="Berriman M."/>
            <person name="Song J."/>
            <person name="Olsen R."/>
            <person name="Szafranski K."/>
            <person name="Xu Q."/>
            <person name="Tunggal B."/>
            <person name="Kummerfeld S."/>
            <person name="Madera M."/>
            <person name="Konfortov B.A."/>
            <person name="Rivero F."/>
            <person name="Bankier A.T."/>
            <person name="Lehmann R."/>
            <person name="Hamlin N."/>
            <person name="Davies R."/>
            <person name="Gaudet P."/>
            <person name="Fey P."/>
            <person name="Pilcher K."/>
            <person name="Chen G."/>
            <person name="Saunders D."/>
            <person name="Sodergren E.J."/>
            <person name="Davis P."/>
            <person name="Kerhornou A."/>
            <person name="Nie X."/>
            <person name="Hall N."/>
            <person name="Anjard C."/>
            <person name="Hemphill L."/>
            <person name="Bason N."/>
            <person name="Farbrother P."/>
            <person name="Desany B."/>
            <person name="Just E."/>
            <person name="Morio T."/>
            <person name="Rost R."/>
            <person name="Churcher C.M."/>
            <person name="Cooper J."/>
            <person name="Haydock S."/>
            <person name="van Driessche N."/>
            <person name="Cronin A."/>
            <person name="Goodhead I."/>
            <person name="Muzny D.M."/>
            <person name="Mourier T."/>
            <person name="Pain A."/>
            <person name="Lu M."/>
            <person name="Harper D."/>
            <person name="Lindsay R."/>
            <person name="Hauser H."/>
            <person name="James K.D."/>
            <person name="Quiles M."/>
            <person name="Madan Babu M."/>
            <person name="Saito T."/>
            <person name="Buchrieser C."/>
            <person name="Wardroper A."/>
            <person name="Felder M."/>
            <person name="Thangavelu M."/>
            <person name="Johnson D."/>
            <person name="Knights A."/>
            <person name="Loulseged H."/>
            <person name="Mungall K.L."/>
            <person name="Oliver K."/>
            <person name="Price C."/>
            <person name="Quail M.A."/>
            <person name="Urushihara H."/>
            <person name="Hernandez J."/>
            <person name="Rabbinowitsch E."/>
            <person name="Steffen D."/>
            <person name="Sanders M."/>
            <person name="Ma J."/>
            <person name="Kohara Y."/>
            <person name="Sharp S."/>
            <person name="Simmonds M.N."/>
            <person name="Spiegler S."/>
            <person name="Tivey A."/>
            <person name="Sugano S."/>
            <person name="White B."/>
            <person name="Walker D."/>
            <person name="Woodward J.R."/>
            <person name="Winckler T."/>
            <person name="Tanaka Y."/>
            <person name="Shaulsky G."/>
            <person name="Schleicher M."/>
            <person name="Weinstock G.M."/>
            <person name="Rosenthal A."/>
            <person name="Cox E.C."/>
            <person name="Chisholm R.L."/>
            <person name="Gibbs R.A."/>
            <person name="Loomis W.F."/>
            <person name="Platzer M."/>
            <person name="Kay R.R."/>
            <person name="Williams J.G."/>
            <person name="Dear P.H."/>
            <person name="Noegel A.A."/>
            <person name="Barrell B.G."/>
            <person name="Kuspa A."/>
        </authorList>
    </citation>
    <scope>NUCLEOTIDE SEQUENCE [LARGE SCALE GENOMIC DNA]</scope>
    <source>
        <strain>AX4</strain>
    </source>
</reference>
<protein>
    <recommendedName>
        <fullName>Enolase B</fullName>
        <ecNumber>4.2.1.11</ecNumber>
    </recommendedName>
    <alternativeName>
        <fullName>2-phospho-D-glycerate hydro-lyase B</fullName>
    </alternativeName>
    <alternativeName>
        <fullName>2-phosphoglycerate dehydratase B</fullName>
    </alternativeName>
</protein>